<sequence length="526" mass="59602">MTDLEKPSITGHMFDVVVIGGGISGLAAAKLLSEYKINVLVLEARDRVGGRTYTVRNEHVKWVDVGGAYVGPTQNRILRLSKELGIETYKVNVNERLVQYVKGKTYPFRGAFPPVWNPLAYLDYNNLWRTMDDMGKEIPVDAPWQARHAEEWDKITMKDLIDKICWTKTAREFAYLFVNINVTSEPHEVSALWFLWYVRQCGGTSRIFSVTNGGQERKFVGGSGQISEQIMVLLGDKVKLSSPVTYIDQTDDNIIIETLNHEHYECKYVISAIPPVLTAKIHFKPELPPERNQLIQRLPMGAVIKCMVYYKEAFWKKKDYCGCMIIEDEEAPISITLDDTKPDGSMPAIMGFILARKAERLAKLHKDIRKRKICELYAKVLGSQEALSPVHYEEKNWCEEQYSGGCYTAYFPPGIMTLYGRVIRQPVGRIYFAGTETATQWSGYMEGAVEAGERAAREVLNALGKVAKKDIWVQEPESKDVPALEITHTFLERNLPSVPGLLKITGFSTSVALLCFVLYKFKQPQS</sequence>
<gene>
    <name evidence="6" type="primary">Maoa</name>
</gene>
<comment type="function">
    <text evidence="2 4">Catalyzes the oxidative deamination of biogenic and xenobiotic amines and has important functions in the metabolism of neuroactive and vasoactive amines in the central nervous system and peripheral tissues (PubMed:7792602). Preferentially oxidizes serotonin (PubMed:7792602). Also catalyzes the oxidative deamination of kynuramine to 3-(2-aminophenyl)-3-oxopropanal that can spontaneously condense to 4-hydroxyquinoline (By similarity).</text>
</comment>
<comment type="catalytic activity">
    <reaction evidence="2">
        <text>a secondary aliphatic amine + O2 + H2O = a primary amine + an aldehyde + H2O2</text>
        <dbReference type="Rhea" id="RHEA:26414"/>
        <dbReference type="ChEBI" id="CHEBI:15377"/>
        <dbReference type="ChEBI" id="CHEBI:15379"/>
        <dbReference type="ChEBI" id="CHEBI:16240"/>
        <dbReference type="ChEBI" id="CHEBI:17478"/>
        <dbReference type="ChEBI" id="CHEBI:58855"/>
        <dbReference type="ChEBI" id="CHEBI:65296"/>
        <dbReference type="EC" id="1.4.3.4"/>
    </reaction>
</comment>
<comment type="catalytic activity">
    <reaction evidence="4">
        <text>a primary methyl amine + O2 + H2O = an aldehyde + H2O2 + NH4(+)</text>
        <dbReference type="Rhea" id="RHEA:16153"/>
        <dbReference type="ChEBI" id="CHEBI:15377"/>
        <dbReference type="ChEBI" id="CHEBI:15379"/>
        <dbReference type="ChEBI" id="CHEBI:16240"/>
        <dbReference type="ChEBI" id="CHEBI:17478"/>
        <dbReference type="ChEBI" id="CHEBI:28938"/>
        <dbReference type="ChEBI" id="CHEBI:228804"/>
        <dbReference type="EC" id="1.4.3.21"/>
    </reaction>
</comment>
<comment type="catalytic activity">
    <reaction evidence="4">
        <text>serotonin + O2 + H2O = (5-hydroxyindol-3-yl)acetaldehyde + H2O2 + NH4(+)</text>
        <dbReference type="Rhea" id="RHEA:69072"/>
        <dbReference type="ChEBI" id="CHEBI:15377"/>
        <dbReference type="ChEBI" id="CHEBI:15379"/>
        <dbReference type="ChEBI" id="CHEBI:16240"/>
        <dbReference type="ChEBI" id="CHEBI:28938"/>
        <dbReference type="ChEBI" id="CHEBI:50157"/>
        <dbReference type="ChEBI" id="CHEBI:350546"/>
    </reaction>
</comment>
<comment type="catalytic activity">
    <reaction evidence="2">
        <text>(R)-adrenaline + O2 + H2O = (R)-3,4-dihydroxymandelaldehyde + methylamine + H2O2</text>
        <dbReference type="Rhea" id="RHEA:51168"/>
        <dbReference type="ChEBI" id="CHEBI:15377"/>
        <dbReference type="ChEBI" id="CHEBI:15379"/>
        <dbReference type="ChEBI" id="CHEBI:16240"/>
        <dbReference type="ChEBI" id="CHEBI:59338"/>
        <dbReference type="ChEBI" id="CHEBI:71406"/>
        <dbReference type="ChEBI" id="CHEBI:180943"/>
    </reaction>
</comment>
<comment type="catalytic activity">
    <reaction evidence="2">
        <text>dopamine + O2 + H2O = 3,4-dihydroxyphenylacetaldehyde + H2O2 + NH4(+)</text>
        <dbReference type="Rhea" id="RHEA:27946"/>
        <dbReference type="ChEBI" id="CHEBI:15377"/>
        <dbReference type="ChEBI" id="CHEBI:15379"/>
        <dbReference type="ChEBI" id="CHEBI:16240"/>
        <dbReference type="ChEBI" id="CHEBI:27978"/>
        <dbReference type="ChEBI" id="CHEBI:28938"/>
        <dbReference type="ChEBI" id="CHEBI:59905"/>
    </reaction>
</comment>
<comment type="catalytic activity">
    <reaction evidence="2">
        <text>tyramine + O2 + H2O = (4-hydroxyphenyl)acetaldehyde + H2O2 + NH4(+)</text>
        <dbReference type="Rhea" id="RHEA:30591"/>
        <dbReference type="ChEBI" id="CHEBI:15377"/>
        <dbReference type="ChEBI" id="CHEBI:15379"/>
        <dbReference type="ChEBI" id="CHEBI:15621"/>
        <dbReference type="ChEBI" id="CHEBI:16240"/>
        <dbReference type="ChEBI" id="CHEBI:28938"/>
        <dbReference type="ChEBI" id="CHEBI:327995"/>
    </reaction>
</comment>
<comment type="catalytic activity">
    <reaction evidence="2">
        <text>(R)-noradrenaline + O2 + H2O = (R)-3,4-dihydroxymandelaldehyde + H2O2 + NH4(+)</text>
        <dbReference type="Rhea" id="RHEA:69076"/>
        <dbReference type="ChEBI" id="CHEBI:15377"/>
        <dbReference type="ChEBI" id="CHEBI:15379"/>
        <dbReference type="ChEBI" id="CHEBI:16240"/>
        <dbReference type="ChEBI" id="CHEBI:28938"/>
        <dbReference type="ChEBI" id="CHEBI:72587"/>
        <dbReference type="ChEBI" id="CHEBI:180943"/>
    </reaction>
</comment>
<comment type="catalytic activity">
    <reaction evidence="2">
        <text>kynuramine + O2 + H2O = 3-(2-aminophenyl)-3-oxopropanal + H2O2 + NH4(+)</text>
        <dbReference type="Rhea" id="RHEA:59596"/>
        <dbReference type="ChEBI" id="CHEBI:15377"/>
        <dbReference type="ChEBI" id="CHEBI:15379"/>
        <dbReference type="ChEBI" id="CHEBI:16240"/>
        <dbReference type="ChEBI" id="CHEBI:28938"/>
        <dbReference type="ChEBI" id="CHEBI:180898"/>
        <dbReference type="ChEBI" id="CHEBI:180899"/>
    </reaction>
    <physiologicalReaction direction="left-to-right" evidence="2">
        <dbReference type="Rhea" id="RHEA:59597"/>
    </physiologicalReaction>
</comment>
<comment type="catalytic activity">
    <reaction evidence="2">
        <text>tryptamine + O2 + H2O = indole-3-acetaldehyde + H2O2 + NH4(+)</text>
        <dbReference type="Rhea" id="RHEA:59416"/>
        <dbReference type="ChEBI" id="CHEBI:15377"/>
        <dbReference type="ChEBI" id="CHEBI:15379"/>
        <dbReference type="ChEBI" id="CHEBI:16240"/>
        <dbReference type="ChEBI" id="CHEBI:18086"/>
        <dbReference type="ChEBI" id="CHEBI:28938"/>
        <dbReference type="ChEBI" id="CHEBI:57887"/>
    </reaction>
</comment>
<comment type="catalytic activity">
    <reaction evidence="2">
        <text>2-phenylethylamine + O2 + H2O = 2-phenylacetaldehyde + H2O2 + NH4(+)</text>
        <dbReference type="Rhea" id="RHEA:25265"/>
        <dbReference type="ChEBI" id="CHEBI:15377"/>
        <dbReference type="ChEBI" id="CHEBI:15379"/>
        <dbReference type="ChEBI" id="CHEBI:16240"/>
        <dbReference type="ChEBI" id="CHEBI:16424"/>
        <dbReference type="ChEBI" id="CHEBI:28938"/>
        <dbReference type="ChEBI" id="CHEBI:225237"/>
    </reaction>
</comment>
<comment type="cofactor">
    <cofactor evidence="3">
        <name>FAD</name>
        <dbReference type="ChEBI" id="CHEBI:57692"/>
    </cofactor>
</comment>
<comment type="subunit">
    <text evidence="3">Monomer, homo- or heterodimer (containing two subunits of similar size). Each subunit contains a covalently bound flavin. Enzymatically active as monomer (By similarity).</text>
</comment>
<comment type="subcellular location">
    <subcellularLocation>
        <location evidence="2">Mitochondrion outer membrane</location>
        <topology evidence="2">Single-pass type IV membrane protein</topology>
        <orientation evidence="2">Cytoplasmic side</orientation>
    </subcellularLocation>
</comment>
<comment type="similarity">
    <text evidence="5">Belongs to the flavin monoamine oxidase family.</text>
</comment>
<feature type="chain" id="PRO_0000099851" description="Amine oxidase [flavin-containing] A">
    <location>
        <begin position="1"/>
        <end position="526"/>
    </location>
</feature>
<feature type="topological domain" description="Cytoplasmic" evidence="1">
    <location>
        <begin position="1"/>
        <end position="497"/>
    </location>
</feature>
<feature type="transmembrane region" description="Helical; Anchor for type IV membrane protein" evidence="1">
    <location>
        <begin position="498"/>
        <end position="518"/>
    </location>
</feature>
<feature type="topological domain" description="Mitochondrial intermembrane" evidence="1">
    <location>
        <begin position="519"/>
        <end position="526"/>
    </location>
</feature>
<feature type="region of interest" description="Interaction with membrane phospholipid headgroups" evidence="1">
    <location>
        <begin position="520"/>
        <end position="522"/>
    </location>
</feature>
<feature type="site" description="Important for substrate specificity" evidence="1">
    <location>
        <position position="335"/>
    </location>
</feature>
<feature type="site" description="Important for catalytic activity" evidence="1">
    <location>
        <position position="374"/>
    </location>
</feature>
<feature type="modified residue" description="N-acetylmethionine" evidence="3">
    <location>
        <position position="1"/>
    </location>
</feature>
<feature type="modified residue" description="Phosphoserine" evidence="2">
    <location>
        <position position="383"/>
    </location>
</feature>
<feature type="modified residue" description="S-8alpha-FAD cysteine" evidence="3">
    <location>
        <position position="406"/>
    </location>
</feature>
<feature type="sequence conflict" description="In Ref. 3; AAH29100." evidence="5" ref="3">
    <original>E</original>
    <variation>D</variation>
    <location>
        <position position="83"/>
    </location>
</feature>
<proteinExistence type="evidence at protein level"/>
<evidence type="ECO:0000250" key="1"/>
<evidence type="ECO:0000250" key="2">
    <source>
        <dbReference type="UniProtKB" id="P21396"/>
    </source>
</evidence>
<evidence type="ECO:0000250" key="3">
    <source>
        <dbReference type="UniProtKB" id="P21397"/>
    </source>
</evidence>
<evidence type="ECO:0000269" key="4">
    <source>
    </source>
</evidence>
<evidence type="ECO:0000305" key="5"/>
<evidence type="ECO:0000312" key="6">
    <source>
        <dbReference type="MGI" id="MGI:96915"/>
    </source>
</evidence>
<keyword id="KW-0007">Acetylation</keyword>
<keyword id="KW-0128">Catecholamine metabolism</keyword>
<keyword id="KW-0903">Direct protein sequencing</keyword>
<keyword id="KW-0274">FAD</keyword>
<keyword id="KW-0285">Flavoprotein</keyword>
<keyword id="KW-0472">Membrane</keyword>
<keyword id="KW-0496">Mitochondrion</keyword>
<keyword id="KW-1000">Mitochondrion outer membrane</keyword>
<keyword id="KW-0531">Neurotransmitter degradation</keyword>
<keyword id="KW-0560">Oxidoreductase</keyword>
<keyword id="KW-0597">Phosphoprotein</keyword>
<keyword id="KW-1185">Reference proteome</keyword>
<keyword id="KW-0812">Transmembrane</keyword>
<keyword id="KW-1133">Transmembrane helix</keyword>
<protein>
    <recommendedName>
        <fullName evidence="5">Amine oxidase [flavin-containing] A</fullName>
        <ecNumber evidence="4">1.4.3.21</ecNumber>
        <ecNumber evidence="2">1.4.3.4</ecNumber>
    </recommendedName>
    <alternativeName>
        <fullName>Monoamine oxidase type A</fullName>
        <shortName>MAO-A</shortName>
    </alternativeName>
</protein>
<reference key="1">
    <citation type="journal article" date="2009" name="PLoS Biol.">
        <title>Lineage-specific biology revealed by a finished genome assembly of the mouse.</title>
        <authorList>
            <person name="Church D.M."/>
            <person name="Goodstadt L."/>
            <person name="Hillier L.W."/>
            <person name="Zody M.C."/>
            <person name="Goldstein S."/>
            <person name="She X."/>
            <person name="Bult C.J."/>
            <person name="Agarwala R."/>
            <person name="Cherry J.L."/>
            <person name="DiCuccio M."/>
            <person name="Hlavina W."/>
            <person name="Kapustin Y."/>
            <person name="Meric P."/>
            <person name="Maglott D."/>
            <person name="Birtle Z."/>
            <person name="Marques A.C."/>
            <person name="Graves T."/>
            <person name="Zhou S."/>
            <person name="Teague B."/>
            <person name="Potamousis K."/>
            <person name="Churas C."/>
            <person name="Place M."/>
            <person name="Herschleb J."/>
            <person name="Runnheim R."/>
            <person name="Forrest D."/>
            <person name="Amos-Landgraf J."/>
            <person name="Schwartz D.C."/>
            <person name="Cheng Z."/>
            <person name="Lindblad-Toh K."/>
            <person name="Eichler E.E."/>
            <person name="Ponting C.P."/>
        </authorList>
    </citation>
    <scope>NUCLEOTIDE SEQUENCE [LARGE SCALE GENOMIC DNA]</scope>
    <source>
        <strain>C57BL/6J</strain>
    </source>
</reference>
<reference key="2">
    <citation type="submission" date="2005-07" db="EMBL/GenBank/DDBJ databases">
        <authorList>
            <person name="Mural R.J."/>
            <person name="Adams M.D."/>
            <person name="Myers E.W."/>
            <person name="Smith H.O."/>
            <person name="Venter J.C."/>
        </authorList>
    </citation>
    <scope>NUCLEOTIDE SEQUENCE [LARGE SCALE GENOMIC DNA]</scope>
</reference>
<reference key="3">
    <citation type="journal article" date="2004" name="Genome Res.">
        <title>The status, quality, and expansion of the NIH full-length cDNA project: the Mammalian Gene Collection (MGC).</title>
        <authorList>
            <consortium name="The MGC Project Team"/>
        </authorList>
    </citation>
    <scope>NUCLEOTIDE SEQUENCE [LARGE SCALE MRNA]</scope>
    <source>
        <strain>FVB/N</strain>
        <tissue>Mammary tumor</tissue>
    </source>
</reference>
<reference key="4">
    <citation type="journal article" date="1995" name="Science">
        <title>Aggressive behavior and altered amounts of brain serotonin and norepinephrine in mice lacking MAOA.</title>
        <authorList>
            <person name="Cases O."/>
            <person name="Seif I."/>
            <person name="Grimsby J."/>
            <person name="Gaspar P."/>
            <person name="Chen K."/>
            <person name="Pournin S."/>
            <person name="Mueller U."/>
            <person name="Aguet M."/>
            <person name="Babinet C."/>
            <person name="Shih J.C."/>
            <person name="de Maeyer E."/>
        </authorList>
    </citation>
    <scope>NUCLEOTIDE SEQUENCE [GENOMIC DNA] OF 19-40</scope>
    <scope>FUNCTION</scope>
    <scope>CATALYTIC ACTIVITY</scope>
</reference>
<reference key="5">
    <citation type="submission" date="2007-04" db="UniProtKB">
        <authorList>
            <person name="Lubec G."/>
            <person name="Kang S.U."/>
        </authorList>
    </citation>
    <scope>PROTEIN SEQUENCE OF 137-147; 207-217; 268-280 AND 380-395</scope>
    <scope>IDENTIFICATION BY MASS SPECTROMETRY</scope>
    <source>
        <strain>C57BL/6J</strain>
        <tissue>Brain</tissue>
    </source>
</reference>
<reference key="6">
    <citation type="journal article" date="2010" name="Cell">
        <title>A tissue-specific atlas of mouse protein phosphorylation and expression.</title>
        <authorList>
            <person name="Huttlin E.L."/>
            <person name="Jedrychowski M.P."/>
            <person name="Elias J.E."/>
            <person name="Goswami T."/>
            <person name="Rad R."/>
            <person name="Beausoleil S.A."/>
            <person name="Villen J."/>
            <person name="Haas W."/>
            <person name="Sowa M.E."/>
            <person name="Gygi S.P."/>
        </authorList>
    </citation>
    <scope>IDENTIFICATION BY MASS SPECTROMETRY [LARGE SCALE ANALYSIS]</scope>
    <source>
        <tissue>Brain</tissue>
        <tissue>Brown adipose tissue</tissue>
        <tissue>Heart</tissue>
        <tissue>Kidney</tissue>
        <tissue>Liver</tissue>
        <tissue>Lung</tissue>
        <tissue>Pancreas</tissue>
        <tissue>Spleen</tissue>
        <tissue>Testis</tissue>
    </source>
</reference>
<organism>
    <name type="scientific">Mus musculus</name>
    <name type="common">Mouse</name>
    <dbReference type="NCBI Taxonomy" id="10090"/>
    <lineage>
        <taxon>Eukaryota</taxon>
        <taxon>Metazoa</taxon>
        <taxon>Chordata</taxon>
        <taxon>Craniata</taxon>
        <taxon>Vertebrata</taxon>
        <taxon>Euteleostomi</taxon>
        <taxon>Mammalia</taxon>
        <taxon>Eutheria</taxon>
        <taxon>Euarchontoglires</taxon>
        <taxon>Glires</taxon>
        <taxon>Rodentia</taxon>
        <taxon>Myomorpha</taxon>
        <taxon>Muroidea</taxon>
        <taxon>Muridae</taxon>
        <taxon>Murinae</taxon>
        <taxon>Mus</taxon>
        <taxon>Mus</taxon>
    </lineage>
</organism>
<accession>Q64133</accession>
<accession>B1AX52</accession>
<accession>Q8K0Z8</accession>
<dbReference type="EC" id="1.4.3.21" evidence="4"/>
<dbReference type="EC" id="1.4.3.4" evidence="2"/>
<dbReference type="EMBL" id="AL805907">
    <property type="status" value="NOT_ANNOTATED_CDS"/>
    <property type="molecule type" value="Genomic_DNA"/>
</dbReference>
<dbReference type="EMBL" id="AL831729">
    <property type="status" value="NOT_ANNOTATED_CDS"/>
    <property type="molecule type" value="Genomic_DNA"/>
</dbReference>
<dbReference type="EMBL" id="CH466584">
    <property type="protein sequence ID" value="EDL35717.1"/>
    <property type="molecule type" value="Genomic_DNA"/>
</dbReference>
<dbReference type="EMBL" id="BC029100">
    <property type="protein sequence ID" value="AAH29100.1"/>
    <property type="molecule type" value="mRNA"/>
</dbReference>
<dbReference type="EMBL" id="S78615">
    <property type="protein sequence ID" value="AAB34677.1"/>
    <property type="molecule type" value="Genomic_DNA"/>
</dbReference>
<dbReference type="EMBL" id="S78606">
    <property type="protein sequence ID" value="AAB34677.1"/>
    <property type="status" value="JOINED"/>
    <property type="molecule type" value="Genomic_DNA"/>
</dbReference>
<dbReference type="CCDS" id="CCDS30033.1"/>
<dbReference type="RefSeq" id="NP_776101.3">
    <property type="nucleotide sequence ID" value="NM_173740.3"/>
</dbReference>
<dbReference type="SMR" id="Q64133"/>
<dbReference type="BioGRID" id="201307">
    <property type="interactions" value="9"/>
</dbReference>
<dbReference type="FunCoup" id="Q64133">
    <property type="interactions" value="1118"/>
</dbReference>
<dbReference type="IntAct" id="Q64133">
    <property type="interactions" value="3"/>
</dbReference>
<dbReference type="MINT" id="Q64133"/>
<dbReference type="STRING" id="10090.ENSMUSP00000026013"/>
<dbReference type="BindingDB" id="Q64133"/>
<dbReference type="ChEMBL" id="CHEMBL3681"/>
<dbReference type="GuidetoPHARMACOLOGY" id="2489"/>
<dbReference type="GlyGen" id="Q64133">
    <property type="glycosylation" value="1 site, 1 O-linked glycan (1 site)"/>
</dbReference>
<dbReference type="iPTMnet" id="Q64133"/>
<dbReference type="PhosphoSitePlus" id="Q64133"/>
<dbReference type="SwissPalm" id="Q64133"/>
<dbReference type="jPOST" id="Q64133"/>
<dbReference type="PaxDb" id="10090-ENSMUSP00000026013"/>
<dbReference type="ProteomicsDB" id="281779"/>
<dbReference type="Pumba" id="Q64133"/>
<dbReference type="TopDownProteomics" id="Q64133"/>
<dbReference type="Antibodypedia" id="10933">
    <property type="antibodies" value="458 antibodies from 39 providers"/>
</dbReference>
<dbReference type="DNASU" id="17161"/>
<dbReference type="Ensembl" id="ENSMUST00000026013.6">
    <property type="protein sequence ID" value="ENSMUSP00000026013.6"/>
    <property type="gene ID" value="ENSMUSG00000025037.7"/>
</dbReference>
<dbReference type="GeneID" id="17161"/>
<dbReference type="KEGG" id="mmu:17161"/>
<dbReference type="UCSC" id="uc009ssa.2">
    <property type="organism name" value="mouse"/>
</dbReference>
<dbReference type="AGR" id="MGI:96915"/>
<dbReference type="CTD" id="4128"/>
<dbReference type="MGI" id="MGI:96915">
    <property type="gene designation" value="Maoa"/>
</dbReference>
<dbReference type="VEuPathDB" id="HostDB:ENSMUSG00000025037"/>
<dbReference type="eggNOG" id="KOG0029">
    <property type="taxonomic scope" value="Eukaryota"/>
</dbReference>
<dbReference type="GeneTree" id="ENSGT00940000160514"/>
<dbReference type="HOGENOM" id="CLU_004498_0_1_1"/>
<dbReference type="InParanoid" id="Q64133"/>
<dbReference type="OMA" id="EWTRGAY"/>
<dbReference type="OrthoDB" id="7777654at2759"/>
<dbReference type="PhylomeDB" id="Q64133"/>
<dbReference type="TreeFam" id="TF313314"/>
<dbReference type="BRENDA" id="1.4.3.4">
    <property type="organism ID" value="3474"/>
</dbReference>
<dbReference type="Reactome" id="R-MMU-141333">
    <property type="pathway name" value="Biogenic amines are oxidatively deaminated to aldehydes by MAOA and MAOB"/>
</dbReference>
<dbReference type="Reactome" id="R-MMU-181430">
    <property type="pathway name" value="Norepinephrine Neurotransmitter Release Cycle"/>
</dbReference>
<dbReference type="Reactome" id="R-MMU-379397">
    <property type="pathway name" value="Enzymatic degradation of dopamine by COMT"/>
</dbReference>
<dbReference type="Reactome" id="R-MMU-379398">
    <property type="pathway name" value="Enzymatic degradation of Dopamine by monoamine oxidase"/>
</dbReference>
<dbReference type="Reactome" id="R-MMU-379401">
    <property type="pathway name" value="Dopamine clearance from the synaptic cleft"/>
</dbReference>
<dbReference type="Reactome" id="R-MMU-380612">
    <property type="pathway name" value="Metabolism of serotonin"/>
</dbReference>
<dbReference type="BioGRID-ORCS" id="17161">
    <property type="hits" value="1 hit in 75 CRISPR screens"/>
</dbReference>
<dbReference type="CD-CODE" id="CE726F99">
    <property type="entry name" value="Postsynaptic density"/>
</dbReference>
<dbReference type="ChiTaRS" id="Maoa">
    <property type="organism name" value="mouse"/>
</dbReference>
<dbReference type="PRO" id="PR:Q64133"/>
<dbReference type="Proteomes" id="UP000000589">
    <property type="component" value="Chromosome X"/>
</dbReference>
<dbReference type="RNAct" id="Q64133">
    <property type="molecule type" value="protein"/>
</dbReference>
<dbReference type="Bgee" id="ENSMUSG00000025037">
    <property type="expression patterns" value="Expressed in small intestine Peyer's patch and 272 other cell types or tissues"/>
</dbReference>
<dbReference type="GO" id="GO:0005829">
    <property type="term" value="C:cytosol"/>
    <property type="evidence" value="ECO:0007669"/>
    <property type="project" value="Ensembl"/>
</dbReference>
<dbReference type="GO" id="GO:0005741">
    <property type="term" value="C:mitochondrial outer membrane"/>
    <property type="evidence" value="ECO:0007669"/>
    <property type="project" value="UniProtKB-SubCell"/>
</dbReference>
<dbReference type="GO" id="GO:0005739">
    <property type="term" value="C:mitochondrion"/>
    <property type="evidence" value="ECO:0007005"/>
    <property type="project" value="MGI"/>
</dbReference>
<dbReference type="GO" id="GO:0097621">
    <property type="term" value="F:monoamine oxidase activity"/>
    <property type="evidence" value="ECO:0000250"/>
    <property type="project" value="UniProtKB"/>
</dbReference>
<dbReference type="GO" id="GO:0008131">
    <property type="term" value="F:primary methylamine oxidase activity"/>
    <property type="evidence" value="ECO:0000314"/>
    <property type="project" value="MGI"/>
</dbReference>
<dbReference type="GO" id="GO:0042420">
    <property type="term" value="P:dopamine catabolic process"/>
    <property type="evidence" value="ECO:0000314"/>
    <property type="project" value="MGI"/>
</dbReference>
<dbReference type="GO" id="GO:0009967">
    <property type="term" value="P:positive regulation of signal transduction"/>
    <property type="evidence" value="ECO:0000315"/>
    <property type="project" value="MGI"/>
</dbReference>
<dbReference type="FunFam" id="1.10.405.10:FF:000005">
    <property type="entry name" value="Amine oxidase [flavin-containing]"/>
    <property type="match status" value="1"/>
</dbReference>
<dbReference type="Gene3D" id="3.90.660.10">
    <property type="match status" value="1"/>
</dbReference>
<dbReference type="Gene3D" id="6.10.250.130">
    <property type="match status" value="1"/>
</dbReference>
<dbReference type="Gene3D" id="3.50.50.60">
    <property type="entry name" value="FAD/NAD(P)-binding domain"/>
    <property type="match status" value="1"/>
</dbReference>
<dbReference type="Gene3D" id="1.10.405.10">
    <property type="entry name" value="Guanine Nucleotide Dissociation Inhibitor, domain 1"/>
    <property type="match status" value="1"/>
</dbReference>
<dbReference type="InterPro" id="IPR002937">
    <property type="entry name" value="Amino_oxidase"/>
</dbReference>
<dbReference type="InterPro" id="IPR036188">
    <property type="entry name" value="FAD/NAD-bd_sf"/>
</dbReference>
<dbReference type="InterPro" id="IPR001613">
    <property type="entry name" value="Flavin_amine_oxidase"/>
</dbReference>
<dbReference type="InterPro" id="IPR050703">
    <property type="entry name" value="Flavin_MAO"/>
</dbReference>
<dbReference type="PANTHER" id="PTHR43563">
    <property type="entry name" value="AMINE OXIDASE"/>
    <property type="match status" value="1"/>
</dbReference>
<dbReference type="PANTHER" id="PTHR43563:SF11">
    <property type="entry name" value="AMINE OXIDASE [FLAVIN-CONTAINING] A"/>
    <property type="match status" value="1"/>
</dbReference>
<dbReference type="Pfam" id="PF01593">
    <property type="entry name" value="Amino_oxidase"/>
    <property type="match status" value="1"/>
</dbReference>
<dbReference type="PRINTS" id="PR00757">
    <property type="entry name" value="AMINEOXDASEF"/>
</dbReference>
<dbReference type="SUPFAM" id="SSF54373">
    <property type="entry name" value="FAD-linked reductases, C-terminal domain"/>
    <property type="match status" value="1"/>
</dbReference>
<dbReference type="SUPFAM" id="SSF51905">
    <property type="entry name" value="FAD/NAD(P)-binding domain"/>
    <property type="match status" value="1"/>
</dbReference>
<name>AOFA_MOUSE</name>